<sequence>MSKDKKNEDKETLEELKELSEWQKRNQEYLKKKAEEEAALAEEKEKERQARMGEESEKSEDKQDQESETDQEDSESAKEESEEKVASSEADKEKEEKEEPESKEKEEQDKKLAKKATKEKPAKAKIPGIHILRAFTILFPSLLLLFVSAYLLSPYATMKDIRVEGTVQTTADDIRQASGIQDSDYTINLLLDKAKYEKQIKSNYWVESAQLVYQFPTKFTIKVKEYDIVAYYISGENHYPILSSGQLETSSVSLNSLPETYLSVLFNDSEQIKVFVSELAQISPELKAAIQKVELAPSKVTSDLIRLTMNDSDEVLVPLSEMSKKLPYYSKIKPQLSEPSVVDMEAGIYSYTVADKLIMEAEEKAKQEAKEAEKKQEEEQKKQEEESNRNQTTQRSSRR</sequence>
<keyword id="KW-0131">Cell cycle</keyword>
<keyword id="KW-0132">Cell division</keyword>
<keyword id="KW-1003">Cell membrane</keyword>
<keyword id="KW-0472">Membrane</keyword>
<keyword id="KW-1185">Reference proteome</keyword>
<keyword id="KW-0812">Transmembrane</keyword>
<keyword id="KW-1133">Transmembrane helix</keyword>
<gene>
    <name evidence="1" type="primary">divIB</name>
    <name type="ordered locus">SP_0690</name>
</gene>
<evidence type="ECO:0000255" key="1">
    <source>
        <dbReference type="HAMAP-Rule" id="MF_00912"/>
    </source>
</evidence>
<evidence type="ECO:0000255" key="2">
    <source>
        <dbReference type="PROSITE-ProRule" id="PRU01115"/>
    </source>
</evidence>
<evidence type="ECO:0000256" key="3">
    <source>
        <dbReference type="SAM" id="MobiDB-lite"/>
    </source>
</evidence>
<comment type="function">
    <text evidence="1">Cell division protein that may be involved in stabilizing or promoting the assembly of the division complex.</text>
</comment>
<comment type="subcellular location">
    <subcellularLocation>
        <location evidence="1">Cell membrane</location>
        <topology evidence="1">Single-pass type II membrane protein</topology>
    </subcellularLocation>
    <text evidence="1">Localizes to the division septum.</text>
</comment>
<comment type="similarity">
    <text evidence="1">Belongs to the FtsQ/DivIB family. DivIB subfamily.</text>
</comment>
<feature type="chain" id="PRO_0000414789" description="Cell division protein DivIB">
    <location>
        <begin position="1"/>
        <end position="399"/>
    </location>
</feature>
<feature type="topological domain" description="Cytoplasmic" evidence="1">
    <location>
        <begin position="1"/>
        <end position="133"/>
    </location>
</feature>
<feature type="transmembrane region" description="Helical" evidence="1">
    <location>
        <begin position="134"/>
        <end position="154"/>
    </location>
</feature>
<feature type="topological domain" description="Extracellular" evidence="1">
    <location>
        <begin position="155"/>
        <end position="399"/>
    </location>
</feature>
<feature type="domain" description="POTRA" evidence="2">
    <location>
        <begin position="156"/>
        <end position="226"/>
    </location>
</feature>
<feature type="region of interest" description="Disordered" evidence="3">
    <location>
        <begin position="1"/>
        <end position="23"/>
    </location>
</feature>
<feature type="region of interest" description="Disordered" evidence="3">
    <location>
        <begin position="35"/>
        <end position="119"/>
    </location>
</feature>
<feature type="region of interest" description="Disordered" evidence="3">
    <location>
        <begin position="364"/>
        <end position="399"/>
    </location>
</feature>
<feature type="compositionally biased region" description="Basic and acidic residues" evidence="3">
    <location>
        <begin position="35"/>
        <end position="65"/>
    </location>
</feature>
<feature type="compositionally biased region" description="Basic and acidic residues" evidence="3">
    <location>
        <begin position="75"/>
        <end position="119"/>
    </location>
</feature>
<feature type="compositionally biased region" description="Basic and acidic residues" evidence="3">
    <location>
        <begin position="364"/>
        <end position="388"/>
    </location>
</feature>
<feature type="compositionally biased region" description="Polar residues" evidence="3">
    <location>
        <begin position="389"/>
        <end position="399"/>
    </location>
</feature>
<protein>
    <recommendedName>
        <fullName evidence="1">Cell division protein DivIB</fullName>
    </recommendedName>
</protein>
<organism>
    <name type="scientific">Streptococcus pneumoniae serotype 4 (strain ATCC BAA-334 / TIGR4)</name>
    <dbReference type="NCBI Taxonomy" id="170187"/>
    <lineage>
        <taxon>Bacteria</taxon>
        <taxon>Bacillati</taxon>
        <taxon>Bacillota</taxon>
        <taxon>Bacilli</taxon>
        <taxon>Lactobacillales</taxon>
        <taxon>Streptococcaceae</taxon>
        <taxon>Streptococcus</taxon>
    </lineage>
</organism>
<dbReference type="EMBL" id="AE005672">
    <property type="protein sequence ID" value="AAK74835.1"/>
    <property type="molecule type" value="Genomic_DNA"/>
</dbReference>
<dbReference type="PIR" id="B95080">
    <property type="entry name" value="B95080"/>
</dbReference>
<dbReference type="RefSeq" id="WP_000031159.1">
    <property type="nucleotide sequence ID" value="NZ_CP155539.1"/>
</dbReference>
<dbReference type="PaxDb" id="170187-SP_0690"/>
<dbReference type="EnsemblBacteria" id="AAK74835">
    <property type="protein sequence ID" value="AAK74835"/>
    <property type="gene ID" value="SP_0690"/>
</dbReference>
<dbReference type="KEGG" id="spn:SP_0690"/>
<dbReference type="eggNOG" id="COG1589">
    <property type="taxonomic scope" value="Bacteria"/>
</dbReference>
<dbReference type="BioCyc" id="SPNE170187:G1FZB-711-MONOMER"/>
<dbReference type="Proteomes" id="UP000000585">
    <property type="component" value="Chromosome"/>
</dbReference>
<dbReference type="GO" id="GO:0032153">
    <property type="term" value="C:cell division site"/>
    <property type="evidence" value="ECO:0007669"/>
    <property type="project" value="UniProtKB-UniRule"/>
</dbReference>
<dbReference type="GO" id="GO:0005886">
    <property type="term" value="C:plasma membrane"/>
    <property type="evidence" value="ECO:0007669"/>
    <property type="project" value="UniProtKB-SubCell"/>
</dbReference>
<dbReference type="GO" id="GO:0043093">
    <property type="term" value="P:FtsZ-dependent cytokinesis"/>
    <property type="evidence" value="ECO:0007669"/>
    <property type="project" value="UniProtKB-UniRule"/>
</dbReference>
<dbReference type="Gene3D" id="3.40.50.10960">
    <property type="match status" value="1"/>
</dbReference>
<dbReference type="Gene3D" id="3.10.20.310">
    <property type="entry name" value="membrane protein fhac"/>
    <property type="match status" value="1"/>
</dbReference>
<dbReference type="HAMAP" id="MF_00912">
    <property type="entry name" value="DivIB"/>
    <property type="match status" value="1"/>
</dbReference>
<dbReference type="InterPro" id="IPR026580">
    <property type="entry name" value="DivIB"/>
</dbReference>
<dbReference type="InterPro" id="IPR050487">
    <property type="entry name" value="FtsQ_DivIB"/>
</dbReference>
<dbReference type="InterPro" id="IPR034746">
    <property type="entry name" value="POTRA"/>
</dbReference>
<dbReference type="InterPro" id="IPR013685">
    <property type="entry name" value="POTRA_FtsQ_type"/>
</dbReference>
<dbReference type="PANTHER" id="PTHR37820">
    <property type="entry name" value="CELL DIVISION PROTEIN DIVIB"/>
    <property type="match status" value="1"/>
</dbReference>
<dbReference type="PANTHER" id="PTHR37820:SF1">
    <property type="entry name" value="CELL DIVISION PROTEIN FTSQ"/>
    <property type="match status" value="1"/>
</dbReference>
<dbReference type="Pfam" id="PF08478">
    <property type="entry name" value="POTRA_1"/>
    <property type="match status" value="1"/>
</dbReference>
<dbReference type="PROSITE" id="PS51779">
    <property type="entry name" value="POTRA"/>
    <property type="match status" value="1"/>
</dbReference>
<accession>Q97RU7</accession>
<name>DIVIB_STRPN</name>
<proteinExistence type="inferred from homology"/>
<reference key="1">
    <citation type="journal article" date="2001" name="Science">
        <title>Complete genome sequence of a virulent isolate of Streptococcus pneumoniae.</title>
        <authorList>
            <person name="Tettelin H."/>
            <person name="Nelson K.E."/>
            <person name="Paulsen I.T."/>
            <person name="Eisen J.A."/>
            <person name="Read T.D."/>
            <person name="Peterson S.N."/>
            <person name="Heidelberg J.F."/>
            <person name="DeBoy R.T."/>
            <person name="Haft D.H."/>
            <person name="Dodson R.J."/>
            <person name="Durkin A.S."/>
            <person name="Gwinn M.L."/>
            <person name="Kolonay J.F."/>
            <person name="Nelson W.C."/>
            <person name="Peterson J.D."/>
            <person name="Umayam L.A."/>
            <person name="White O."/>
            <person name="Salzberg S.L."/>
            <person name="Lewis M.R."/>
            <person name="Radune D."/>
            <person name="Holtzapple E.K."/>
            <person name="Khouri H.M."/>
            <person name="Wolf A.M."/>
            <person name="Utterback T.R."/>
            <person name="Hansen C.L."/>
            <person name="McDonald L.A."/>
            <person name="Feldblyum T.V."/>
            <person name="Angiuoli S.V."/>
            <person name="Dickinson T."/>
            <person name="Hickey E.K."/>
            <person name="Holt I.E."/>
            <person name="Loftus B.J."/>
            <person name="Yang F."/>
            <person name="Smith H.O."/>
            <person name="Venter J.C."/>
            <person name="Dougherty B.A."/>
            <person name="Morrison D.A."/>
            <person name="Hollingshead S.K."/>
            <person name="Fraser C.M."/>
        </authorList>
    </citation>
    <scope>NUCLEOTIDE SEQUENCE [LARGE SCALE GENOMIC DNA]</scope>
    <source>
        <strain>ATCC BAA-334 / TIGR4</strain>
    </source>
</reference>